<comment type="function">
    <text evidence="1">Binds directly to 23S ribosomal RNA and is necessary for the in vitro assembly process of the 50S ribosomal subunit. It is not involved in the protein synthesizing functions of that subunit.</text>
</comment>
<comment type="similarity">
    <text evidence="1">Belongs to the bacterial ribosomal protein bL20 family.</text>
</comment>
<protein>
    <recommendedName>
        <fullName evidence="1">Large ribosomal subunit protein bL20</fullName>
    </recommendedName>
    <alternativeName>
        <fullName evidence="2">50S ribosomal protein L20</fullName>
    </alternativeName>
</protein>
<reference key="1">
    <citation type="journal article" date="2009" name="Environ. Microbiol.">
        <title>Contribution of mobile genetic elements to Desulfovibrio vulgaris genome plasticity.</title>
        <authorList>
            <person name="Walker C.B."/>
            <person name="Stolyar S."/>
            <person name="Chivian D."/>
            <person name="Pinel N."/>
            <person name="Gabster J.A."/>
            <person name="Dehal P.S."/>
            <person name="He Z."/>
            <person name="Yang Z.K."/>
            <person name="Yen H.C."/>
            <person name="Zhou J."/>
            <person name="Wall J.D."/>
            <person name="Hazen T.C."/>
            <person name="Arkin A.P."/>
            <person name="Stahl D.A."/>
        </authorList>
    </citation>
    <scope>NUCLEOTIDE SEQUENCE [LARGE SCALE GENOMIC DNA]</scope>
    <source>
        <strain>DP4</strain>
    </source>
</reference>
<keyword id="KW-0687">Ribonucleoprotein</keyword>
<keyword id="KW-0689">Ribosomal protein</keyword>
<keyword id="KW-0694">RNA-binding</keyword>
<keyword id="KW-0699">rRNA-binding</keyword>
<organism>
    <name type="scientific">Nitratidesulfovibrio vulgaris (strain DP4)</name>
    <name type="common">Desulfovibrio vulgaris</name>
    <dbReference type="NCBI Taxonomy" id="391774"/>
    <lineage>
        <taxon>Bacteria</taxon>
        <taxon>Pseudomonadati</taxon>
        <taxon>Thermodesulfobacteriota</taxon>
        <taxon>Desulfovibrionia</taxon>
        <taxon>Desulfovibrionales</taxon>
        <taxon>Desulfovibrionaceae</taxon>
        <taxon>Nitratidesulfovibrio</taxon>
    </lineage>
</organism>
<dbReference type="EMBL" id="CP000527">
    <property type="protein sequence ID" value="ABM27733.1"/>
    <property type="molecule type" value="Genomic_DNA"/>
</dbReference>
<dbReference type="RefSeq" id="WP_010939805.1">
    <property type="nucleotide sequence ID" value="NC_008751.1"/>
</dbReference>
<dbReference type="SMR" id="A1VBB7"/>
<dbReference type="KEGG" id="dvl:Dvul_0710"/>
<dbReference type="HOGENOM" id="CLU_123265_0_1_7"/>
<dbReference type="Proteomes" id="UP000009173">
    <property type="component" value="Chromosome"/>
</dbReference>
<dbReference type="GO" id="GO:1990904">
    <property type="term" value="C:ribonucleoprotein complex"/>
    <property type="evidence" value="ECO:0007669"/>
    <property type="project" value="UniProtKB-KW"/>
</dbReference>
<dbReference type="GO" id="GO:0005840">
    <property type="term" value="C:ribosome"/>
    <property type="evidence" value="ECO:0007669"/>
    <property type="project" value="UniProtKB-KW"/>
</dbReference>
<dbReference type="GO" id="GO:0019843">
    <property type="term" value="F:rRNA binding"/>
    <property type="evidence" value="ECO:0007669"/>
    <property type="project" value="UniProtKB-UniRule"/>
</dbReference>
<dbReference type="GO" id="GO:0003735">
    <property type="term" value="F:structural constituent of ribosome"/>
    <property type="evidence" value="ECO:0007669"/>
    <property type="project" value="InterPro"/>
</dbReference>
<dbReference type="GO" id="GO:0000027">
    <property type="term" value="P:ribosomal large subunit assembly"/>
    <property type="evidence" value="ECO:0007669"/>
    <property type="project" value="UniProtKB-UniRule"/>
</dbReference>
<dbReference type="GO" id="GO:0006412">
    <property type="term" value="P:translation"/>
    <property type="evidence" value="ECO:0007669"/>
    <property type="project" value="InterPro"/>
</dbReference>
<dbReference type="CDD" id="cd07026">
    <property type="entry name" value="Ribosomal_L20"/>
    <property type="match status" value="1"/>
</dbReference>
<dbReference type="FunFam" id="1.10.1900.20:FF:000001">
    <property type="entry name" value="50S ribosomal protein L20"/>
    <property type="match status" value="1"/>
</dbReference>
<dbReference type="Gene3D" id="6.10.160.10">
    <property type="match status" value="1"/>
</dbReference>
<dbReference type="Gene3D" id="1.10.1900.20">
    <property type="entry name" value="Ribosomal protein L20"/>
    <property type="match status" value="1"/>
</dbReference>
<dbReference type="HAMAP" id="MF_00382">
    <property type="entry name" value="Ribosomal_bL20"/>
    <property type="match status" value="1"/>
</dbReference>
<dbReference type="InterPro" id="IPR005813">
    <property type="entry name" value="Ribosomal_bL20"/>
</dbReference>
<dbReference type="InterPro" id="IPR049946">
    <property type="entry name" value="RIBOSOMAL_L20_CS"/>
</dbReference>
<dbReference type="InterPro" id="IPR035566">
    <property type="entry name" value="Ribosomal_protein_bL20_C"/>
</dbReference>
<dbReference type="NCBIfam" id="TIGR01032">
    <property type="entry name" value="rplT_bact"/>
    <property type="match status" value="1"/>
</dbReference>
<dbReference type="PANTHER" id="PTHR10986">
    <property type="entry name" value="39S RIBOSOMAL PROTEIN L20"/>
    <property type="match status" value="1"/>
</dbReference>
<dbReference type="Pfam" id="PF00453">
    <property type="entry name" value="Ribosomal_L20"/>
    <property type="match status" value="1"/>
</dbReference>
<dbReference type="PRINTS" id="PR00062">
    <property type="entry name" value="RIBOSOMALL20"/>
</dbReference>
<dbReference type="SUPFAM" id="SSF74731">
    <property type="entry name" value="Ribosomal protein L20"/>
    <property type="match status" value="1"/>
</dbReference>
<dbReference type="PROSITE" id="PS00937">
    <property type="entry name" value="RIBOSOMAL_L20"/>
    <property type="match status" value="1"/>
</dbReference>
<evidence type="ECO:0000255" key="1">
    <source>
        <dbReference type="HAMAP-Rule" id="MF_00382"/>
    </source>
</evidence>
<evidence type="ECO:0000305" key="2"/>
<gene>
    <name evidence="1" type="primary">rplT</name>
    <name type="ordered locus">Dvul_0710</name>
</gene>
<accession>A1VBB7</accession>
<sequence>MRVKRGLAAHRRHKKYLDMAKGYRGGRSRLYRTAREAVERSLCYAFRDRKVKKREFRKLWILRINAAARLNGLSYSKFMHGLTLAGVELNRKVLADLAVREKDDFAKIAELAKSKLN</sequence>
<name>RL20_NITV4</name>
<feature type="chain" id="PRO_1000048969" description="Large ribosomal subunit protein bL20">
    <location>
        <begin position="1"/>
        <end position="117"/>
    </location>
</feature>
<proteinExistence type="inferred from homology"/>